<reference key="1">
    <citation type="submission" date="2006-12" db="EMBL/GenBank/DDBJ databases">
        <title>Complete sequence of chromosome 1 of Verminephrobacter eiseniae EF01-2.</title>
        <authorList>
            <person name="Copeland A."/>
            <person name="Lucas S."/>
            <person name="Lapidus A."/>
            <person name="Barry K."/>
            <person name="Detter J.C."/>
            <person name="Glavina del Rio T."/>
            <person name="Dalin E."/>
            <person name="Tice H."/>
            <person name="Pitluck S."/>
            <person name="Chertkov O."/>
            <person name="Brettin T."/>
            <person name="Bruce D."/>
            <person name="Han C."/>
            <person name="Tapia R."/>
            <person name="Gilna P."/>
            <person name="Schmutz J."/>
            <person name="Larimer F."/>
            <person name="Land M."/>
            <person name="Hauser L."/>
            <person name="Kyrpides N."/>
            <person name="Kim E."/>
            <person name="Stahl D."/>
            <person name="Richardson P."/>
        </authorList>
    </citation>
    <scope>NUCLEOTIDE SEQUENCE [LARGE SCALE GENOMIC DNA]</scope>
    <source>
        <strain>EF01-2</strain>
    </source>
</reference>
<dbReference type="EC" id="1.4.3.5" evidence="1"/>
<dbReference type="EMBL" id="CP000542">
    <property type="protein sequence ID" value="ABM58309.1"/>
    <property type="molecule type" value="Genomic_DNA"/>
</dbReference>
<dbReference type="RefSeq" id="WP_011810310.1">
    <property type="nucleotide sequence ID" value="NC_008786.1"/>
</dbReference>
<dbReference type="SMR" id="A1WL02"/>
<dbReference type="STRING" id="391735.Veis_2564"/>
<dbReference type="GeneID" id="76461092"/>
<dbReference type="KEGG" id="vei:Veis_2564"/>
<dbReference type="eggNOG" id="COG0259">
    <property type="taxonomic scope" value="Bacteria"/>
</dbReference>
<dbReference type="HOGENOM" id="CLU_032263_2_2_4"/>
<dbReference type="OrthoDB" id="9780392at2"/>
<dbReference type="UniPathway" id="UPA01068">
    <property type="reaction ID" value="UER00304"/>
</dbReference>
<dbReference type="UniPathway" id="UPA01068">
    <property type="reaction ID" value="UER00305"/>
</dbReference>
<dbReference type="Proteomes" id="UP000000374">
    <property type="component" value="Chromosome"/>
</dbReference>
<dbReference type="GO" id="GO:0010181">
    <property type="term" value="F:FMN binding"/>
    <property type="evidence" value="ECO:0007669"/>
    <property type="project" value="UniProtKB-UniRule"/>
</dbReference>
<dbReference type="GO" id="GO:0004733">
    <property type="term" value="F:pyridoxamine phosphate oxidase activity"/>
    <property type="evidence" value="ECO:0007669"/>
    <property type="project" value="UniProtKB-UniRule"/>
</dbReference>
<dbReference type="GO" id="GO:0008615">
    <property type="term" value="P:pyridoxine biosynthetic process"/>
    <property type="evidence" value="ECO:0007669"/>
    <property type="project" value="UniProtKB-KW"/>
</dbReference>
<dbReference type="Gene3D" id="2.30.110.10">
    <property type="entry name" value="Electron Transport, Fmn-binding Protein, Chain A"/>
    <property type="match status" value="1"/>
</dbReference>
<dbReference type="HAMAP" id="MF_01629">
    <property type="entry name" value="PdxH"/>
    <property type="match status" value="1"/>
</dbReference>
<dbReference type="InterPro" id="IPR000659">
    <property type="entry name" value="Pyridox_Oxase"/>
</dbReference>
<dbReference type="InterPro" id="IPR019740">
    <property type="entry name" value="Pyridox_Oxase_CS"/>
</dbReference>
<dbReference type="InterPro" id="IPR011576">
    <property type="entry name" value="Pyridox_Oxase_N"/>
</dbReference>
<dbReference type="InterPro" id="IPR019576">
    <property type="entry name" value="Pyridoxamine_oxidase_dimer_C"/>
</dbReference>
<dbReference type="InterPro" id="IPR012349">
    <property type="entry name" value="Split_barrel_FMN-bd"/>
</dbReference>
<dbReference type="NCBIfam" id="TIGR00558">
    <property type="entry name" value="pdxH"/>
    <property type="match status" value="1"/>
</dbReference>
<dbReference type="NCBIfam" id="NF004231">
    <property type="entry name" value="PRK05679.1"/>
    <property type="match status" value="1"/>
</dbReference>
<dbReference type="PANTHER" id="PTHR10851:SF0">
    <property type="entry name" value="PYRIDOXINE-5'-PHOSPHATE OXIDASE"/>
    <property type="match status" value="1"/>
</dbReference>
<dbReference type="PANTHER" id="PTHR10851">
    <property type="entry name" value="PYRIDOXINE-5-PHOSPHATE OXIDASE"/>
    <property type="match status" value="1"/>
</dbReference>
<dbReference type="Pfam" id="PF10590">
    <property type="entry name" value="PNP_phzG_C"/>
    <property type="match status" value="1"/>
</dbReference>
<dbReference type="Pfam" id="PF01243">
    <property type="entry name" value="PNPOx_N"/>
    <property type="match status" value="1"/>
</dbReference>
<dbReference type="PIRSF" id="PIRSF000190">
    <property type="entry name" value="Pyd_amn-ph_oxd"/>
    <property type="match status" value="1"/>
</dbReference>
<dbReference type="SUPFAM" id="SSF50475">
    <property type="entry name" value="FMN-binding split barrel"/>
    <property type="match status" value="1"/>
</dbReference>
<dbReference type="PROSITE" id="PS01064">
    <property type="entry name" value="PYRIDOX_OXIDASE"/>
    <property type="match status" value="1"/>
</dbReference>
<organism>
    <name type="scientific">Verminephrobacter eiseniae (strain EF01-2)</name>
    <dbReference type="NCBI Taxonomy" id="391735"/>
    <lineage>
        <taxon>Bacteria</taxon>
        <taxon>Pseudomonadati</taxon>
        <taxon>Pseudomonadota</taxon>
        <taxon>Betaproteobacteria</taxon>
        <taxon>Burkholderiales</taxon>
        <taxon>Comamonadaceae</taxon>
        <taxon>Verminephrobacter</taxon>
    </lineage>
</organism>
<proteinExistence type="inferred from homology"/>
<sequence>MNLSIAELRKSYGRAELNEDAAHADPLQQFDQWLGQAIAAQLPEPNAMTLATVGSDLRPSTRIVLIKGYDERGIVWFTNYDSRKGRQIAGNPCAALQFHWVELERVVRIEGLVQKVSDQESDAYFDSRPLDSRIGAWASPQSQVIAGRGVLLANAARYGAQFMLKPPRPQHWGGYRLEPDLWEFWQGRKSRLHDRLRYRMAGGQWVRERLAP</sequence>
<feature type="chain" id="PRO_0000292334" description="Pyridoxine/pyridoxamine 5'-phosphate oxidase">
    <location>
        <begin position="1"/>
        <end position="212"/>
    </location>
</feature>
<feature type="binding site" evidence="1">
    <location>
        <begin position="9"/>
        <end position="12"/>
    </location>
    <ligand>
        <name>substrate</name>
    </ligand>
</feature>
<feature type="binding site" evidence="1">
    <location>
        <begin position="62"/>
        <end position="67"/>
    </location>
    <ligand>
        <name>FMN</name>
        <dbReference type="ChEBI" id="CHEBI:58210"/>
    </ligand>
</feature>
<feature type="binding site" evidence="1">
    <location>
        <position position="67"/>
    </location>
    <ligand>
        <name>substrate</name>
    </ligand>
</feature>
<feature type="binding site" evidence="1">
    <location>
        <begin position="77"/>
        <end position="78"/>
    </location>
    <ligand>
        <name>FMN</name>
        <dbReference type="ChEBI" id="CHEBI:58210"/>
    </ligand>
</feature>
<feature type="binding site" evidence="1">
    <location>
        <position position="83"/>
    </location>
    <ligand>
        <name>FMN</name>
        <dbReference type="ChEBI" id="CHEBI:58210"/>
    </ligand>
</feature>
<feature type="binding site" evidence="1">
    <location>
        <position position="84"/>
    </location>
    <ligand>
        <name>FMN</name>
        <dbReference type="ChEBI" id="CHEBI:58210"/>
    </ligand>
</feature>
<feature type="binding site" evidence="1">
    <location>
        <position position="124"/>
    </location>
    <ligand>
        <name>substrate</name>
    </ligand>
</feature>
<feature type="binding site" evidence="1">
    <location>
        <position position="128"/>
    </location>
    <ligand>
        <name>substrate</name>
    </ligand>
</feature>
<feature type="binding site" evidence="1">
    <location>
        <position position="132"/>
    </location>
    <ligand>
        <name>substrate</name>
    </ligand>
</feature>
<feature type="binding site" evidence="1">
    <location>
        <begin position="141"/>
        <end position="142"/>
    </location>
    <ligand>
        <name>FMN</name>
        <dbReference type="ChEBI" id="CHEBI:58210"/>
    </ligand>
</feature>
<feature type="binding site" evidence="1">
    <location>
        <position position="185"/>
    </location>
    <ligand>
        <name>FMN</name>
        <dbReference type="ChEBI" id="CHEBI:58210"/>
    </ligand>
</feature>
<feature type="binding site" evidence="1">
    <location>
        <begin position="191"/>
        <end position="193"/>
    </location>
    <ligand>
        <name>substrate</name>
    </ligand>
</feature>
<feature type="binding site" evidence="1">
    <location>
        <position position="195"/>
    </location>
    <ligand>
        <name>FMN</name>
        <dbReference type="ChEBI" id="CHEBI:58210"/>
    </ligand>
</feature>
<protein>
    <recommendedName>
        <fullName evidence="1">Pyridoxine/pyridoxamine 5'-phosphate oxidase</fullName>
        <ecNumber evidence="1">1.4.3.5</ecNumber>
    </recommendedName>
    <alternativeName>
        <fullName evidence="1">PNP/PMP oxidase</fullName>
        <shortName evidence="1">PNPOx</shortName>
    </alternativeName>
    <alternativeName>
        <fullName evidence="1">Pyridoxal 5'-phosphate synthase</fullName>
    </alternativeName>
</protein>
<gene>
    <name evidence="1" type="primary">pdxH</name>
    <name type="ordered locus">Veis_2564</name>
</gene>
<evidence type="ECO:0000255" key="1">
    <source>
        <dbReference type="HAMAP-Rule" id="MF_01629"/>
    </source>
</evidence>
<keyword id="KW-0285">Flavoprotein</keyword>
<keyword id="KW-0288">FMN</keyword>
<keyword id="KW-0560">Oxidoreductase</keyword>
<keyword id="KW-0664">Pyridoxine biosynthesis</keyword>
<keyword id="KW-1185">Reference proteome</keyword>
<comment type="function">
    <text evidence="1">Catalyzes the oxidation of either pyridoxine 5'-phosphate (PNP) or pyridoxamine 5'-phosphate (PMP) into pyridoxal 5'-phosphate (PLP).</text>
</comment>
<comment type="catalytic activity">
    <reaction evidence="1">
        <text>pyridoxamine 5'-phosphate + O2 + H2O = pyridoxal 5'-phosphate + H2O2 + NH4(+)</text>
        <dbReference type="Rhea" id="RHEA:15817"/>
        <dbReference type="ChEBI" id="CHEBI:15377"/>
        <dbReference type="ChEBI" id="CHEBI:15379"/>
        <dbReference type="ChEBI" id="CHEBI:16240"/>
        <dbReference type="ChEBI" id="CHEBI:28938"/>
        <dbReference type="ChEBI" id="CHEBI:58451"/>
        <dbReference type="ChEBI" id="CHEBI:597326"/>
        <dbReference type="EC" id="1.4.3.5"/>
    </reaction>
</comment>
<comment type="catalytic activity">
    <reaction evidence="1">
        <text>pyridoxine 5'-phosphate + O2 = pyridoxal 5'-phosphate + H2O2</text>
        <dbReference type="Rhea" id="RHEA:15149"/>
        <dbReference type="ChEBI" id="CHEBI:15379"/>
        <dbReference type="ChEBI" id="CHEBI:16240"/>
        <dbReference type="ChEBI" id="CHEBI:58589"/>
        <dbReference type="ChEBI" id="CHEBI:597326"/>
        <dbReference type="EC" id="1.4.3.5"/>
    </reaction>
</comment>
<comment type="cofactor">
    <cofactor evidence="1">
        <name>FMN</name>
        <dbReference type="ChEBI" id="CHEBI:58210"/>
    </cofactor>
    <text evidence="1">Binds 1 FMN per subunit.</text>
</comment>
<comment type="pathway">
    <text evidence="1">Cofactor metabolism; pyridoxal 5'-phosphate salvage; pyridoxal 5'-phosphate from pyridoxamine 5'-phosphate: step 1/1.</text>
</comment>
<comment type="pathway">
    <text evidence="1">Cofactor metabolism; pyridoxal 5'-phosphate salvage; pyridoxal 5'-phosphate from pyridoxine 5'-phosphate: step 1/1.</text>
</comment>
<comment type="subunit">
    <text evidence="1">Homodimer.</text>
</comment>
<comment type="similarity">
    <text evidence="1">Belongs to the pyridoxamine 5'-phosphate oxidase family.</text>
</comment>
<name>PDXH_VEREI</name>
<accession>A1WL02</accession>